<organism>
    <name type="scientific">Xanthomonas axonopodis pv. citri (strain 306)</name>
    <dbReference type="NCBI Taxonomy" id="190486"/>
    <lineage>
        <taxon>Bacteria</taxon>
        <taxon>Pseudomonadati</taxon>
        <taxon>Pseudomonadota</taxon>
        <taxon>Gammaproteobacteria</taxon>
        <taxon>Lysobacterales</taxon>
        <taxon>Lysobacteraceae</taxon>
        <taxon>Xanthomonas</taxon>
    </lineage>
</organism>
<proteinExistence type="inferred from homology"/>
<gene>
    <name evidence="1" type="primary">hisC</name>
    <name type="ordered locus">XAC1830</name>
</gene>
<feature type="chain" id="PRO_0000153480" description="Histidinol-phosphate aminotransferase">
    <location>
        <begin position="1"/>
        <end position="363"/>
    </location>
</feature>
<feature type="modified residue" description="N6-(pyridoxal phosphate)lysine" evidence="1">
    <location>
        <position position="218"/>
    </location>
</feature>
<dbReference type="EC" id="2.6.1.9" evidence="1"/>
<dbReference type="EMBL" id="AE008923">
    <property type="protein sequence ID" value="AAM36692.1"/>
    <property type="molecule type" value="Genomic_DNA"/>
</dbReference>
<dbReference type="RefSeq" id="WP_011051170.1">
    <property type="nucleotide sequence ID" value="NC_003919.1"/>
</dbReference>
<dbReference type="SMR" id="P58891"/>
<dbReference type="GeneID" id="66910976"/>
<dbReference type="KEGG" id="xac:XAC1830"/>
<dbReference type="eggNOG" id="COG0079">
    <property type="taxonomic scope" value="Bacteria"/>
</dbReference>
<dbReference type="HOGENOM" id="CLU_017584_3_1_6"/>
<dbReference type="UniPathway" id="UPA00031">
    <property type="reaction ID" value="UER00012"/>
</dbReference>
<dbReference type="Proteomes" id="UP000000576">
    <property type="component" value="Chromosome"/>
</dbReference>
<dbReference type="GO" id="GO:0004400">
    <property type="term" value="F:histidinol-phosphate transaminase activity"/>
    <property type="evidence" value="ECO:0007669"/>
    <property type="project" value="UniProtKB-UniRule"/>
</dbReference>
<dbReference type="GO" id="GO:0030170">
    <property type="term" value="F:pyridoxal phosphate binding"/>
    <property type="evidence" value="ECO:0007669"/>
    <property type="project" value="InterPro"/>
</dbReference>
<dbReference type="GO" id="GO:0000105">
    <property type="term" value="P:L-histidine biosynthetic process"/>
    <property type="evidence" value="ECO:0007669"/>
    <property type="project" value="UniProtKB-UniRule"/>
</dbReference>
<dbReference type="CDD" id="cd00609">
    <property type="entry name" value="AAT_like"/>
    <property type="match status" value="1"/>
</dbReference>
<dbReference type="Gene3D" id="3.90.1150.10">
    <property type="entry name" value="Aspartate Aminotransferase, domain 1"/>
    <property type="match status" value="1"/>
</dbReference>
<dbReference type="Gene3D" id="3.40.640.10">
    <property type="entry name" value="Type I PLP-dependent aspartate aminotransferase-like (Major domain)"/>
    <property type="match status" value="1"/>
</dbReference>
<dbReference type="HAMAP" id="MF_01023">
    <property type="entry name" value="HisC_aminotrans_2"/>
    <property type="match status" value="1"/>
</dbReference>
<dbReference type="InterPro" id="IPR004839">
    <property type="entry name" value="Aminotransferase_I/II_large"/>
</dbReference>
<dbReference type="InterPro" id="IPR005861">
    <property type="entry name" value="HisP_aminotrans"/>
</dbReference>
<dbReference type="InterPro" id="IPR015424">
    <property type="entry name" value="PyrdxlP-dep_Trfase"/>
</dbReference>
<dbReference type="InterPro" id="IPR015421">
    <property type="entry name" value="PyrdxlP-dep_Trfase_major"/>
</dbReference>
<dbReference type="InterPro" id="IPR015422">
    <property type="entry name" value="PyrdxlP-dep_Trfase_small"/>
</dbReference>
<dbReference type="NCBIfam" id="TIGR01141">
    <property type="entry name" value="hisC"/>
    <property type="match status" value="1"/>
</dbReference>
<dbReference type="PANTHER" id="PTHR42885:SF2">
    <property type="entry name" value="HISTIDINOL-PHOSPHATE AMINOTRANSFERASE"/>
    <property type="match status" value="1"/>
</dbReference>
<dbReference type="PANTHER" id="PTHR42885">
    <property type="entry name" value="HISTIDINOL-PHOSPHATE AMINOTRANSFERASE-RELATED"/>
    <property type="match status" value="1"/>
</dbReference>
<dbReference type="Pfam" id="PF00155">
    <property type="entry name" value="Aminotran_1_2"/>
    <property type="match status" value="1"/>
</dbReference>
<dbReference type="SUPFAM" id="SSF53383">
    <property type="entry name" value="PLP-dependent transferases"/>
    <property type="match status" value="1"/>
</dbReference>
<protein>
    <recommendedName>
        <fullName evidence="1">Histidinol-phosphate aminotransferase</fullName>
        <ecNumber evidence="1">2.6.1.9</ecNumber>
    </recommendedName>
    <alternativeName>
        <fullName evidence="1">Imidazole acetol-phosphate transaminase</fullName>
    </alternativeName>
</protein>
<comment type="catalytic activity">
    <reaction evidence="1">
        <text>L-histidinol phosphate + 2-oxoglutarate = 3-(imidazol-4-yl)-2-oxopropyl phosphate + L-glutamate</text>
        <dbReference type="Rhea" id="RHEA:23744"/>
        <dbReference type="ChEBI" id="CHEBI:16810"/>
        <dbReference type="ChEBI" id="CHEBI:29985"/>
        <dbReference type="ChEBI" id="CHEBI:57766"/>
        <dbReference type="ChEBI" id="CHEBI:57980"/>
        <dbReference type="EC" id="2.6.1.9"/>
    </reaction>
</comment>
<comment type="cofactor">
    <cofactor evidence="1">
        <name>pyridoxal 5'-phosphate</name>
        <dbReference type="ChEBI" id="CHEBI:597326"/>
    </cofactor>
</comment>
<comment type="pathway">
    <text evidence="1">Amino-acid biosynthesis; L-histidine biosynthesis; L-histidine from 5-phospho-alpha-D-ribose 1-diphosphate: step 7/9.</text>
</comment>
<comment type="subunit">
    <text evidence="1">Homodimer.</text>
</comment>
<comment type="similarity">
    <text evidence="1">Belongs to the class-II pyridoxal-phosphate-dependent aminotransferase family. Histidinol-phosphate aminotransferase subfamily.</text>
</comment>
<name>HIS8_XANAC</name>
<keyword id="KW-0028">Amino-acid biosynthesis</keyword>
<keyword id="KW-0032">Aminotransferase</keyword>
<keyword id="KW-0368">Histidine biosynthesis</keyword>
<keyword id="KW-0663">Pyridoxal phosphate</keyword>
<keyword id="KW-0808">Transferase</keyword>
<accession>P58891</accession>
<sequence>MSASSILDLVREDLRAFAGYSSARTSALQGDVWLNANESAWANPADPDASTRRYPDPQPKGLRSALAALYGCAPEQLLIGRGSDEAIDLLVRGLCVPERDAVLVTPPVFGMYAVCARLQNAPLVDVPLVDGPDGFHADIPAIVAMALSSNAKLVFLCSPSNPAGSAIALDQIEQALQALQGKALVVVDEAYGEFSDVPSAVGLLGRYDNLAVLRTLSKAHALAAARIGTLIANAELIALLRRCQAPYPVPTPCAAMAEQALSAPALEVTRRRIAEVRSERERMHKALVQLPGVRQVYPSQGNFLLVRFDDAEGAFQALLEAGVVVRDQRAVPRLADALRITLGTNEQNQRVLSALQRTQEAAA</sequence>
<reference key="1">
    <citation type="journal article" date="2002" name="Nature">
        <title>Comparison of the genomes of two Xanthomonas pathogens with differing host specificities.</title>
        <authorList>
            <person name="da Silva A.C.R."/>
            <person name="Ferro J.A."/>
            <person name="Reinach F.C."/>
            <person name="Farah C.S."/>
            <person name="Furlan L.R."/>
            <person name="Quaggio R.B."/>
            <person name="Monteiro-Vitorello C.B."/>
            <person name="Van Sluys M.A."/>
            <person name="Almeida N.F. Jr."/>
            <person name="Alves L.M.C."/>
            <person name="do Amaral A.M."/>
            <person name="Bertolini M.C."/>
            <person name="Camargo L.E.A."/>
            <person name="Camarotte G."/>
            <person name="Cannavan F."/>
            <person name="Cardozo J."/>
            <person name="Chambergo F."/>
            <person name="Ciapina L.P."/>
            <person name="Cicarelli R.M.B."/>
            <person name="Coutinho L.L."/>
            <person name="Cursino-Santos J.R."/>
            <person name="El-Dorry H."/>
            <person name="Faria J.B."/>
            <person name="Ferreira A.J.S."/>
            <person name="Ferreira R.C.C."/>
            <person name="Ferro M.I.T."/>
            <person name="Formighieri E.F."/>
            <person name="Franco M.C."/>
            <person name="Greggio C.C."/>
            <person name="Gruber A."/>
            <person name="Katsuyama A.M."/>
            <person name="Kishi L.T."/>
            <person name="Leite R.P."/>
            <person name="Lemos E.G.M."/>
            <person name="Lemos M.V.F."/>
            <person name="Locali E.C."/>
            <person name="Machado M.A."/>
            <person name="Madeira A.M.B.N."/>
            <person name="Martinez-Rossi N.M."/>
            <person name="Martins E.C."/>
            <person name="Meidanis J."/>
            <person name="Menck C.F.M."/>
            <person name="Miyaki C.Y."/>
            <person name="Moon D.H."/>
            <person name="Moreira L.M."/>
            <person name="Novo M.T.M."/>
            <person name="Okura V.K."/>
            <person name="Oliveira M.C."/>
            <person name="Oliveira V.R."/>
            <person name="Pereira H.A."/>
            <person name="Rossi A."/>
            <person name="Sena J.A.D."/>
            <person name="Silva C."/>
            <person name="de Souza R.F."/>
            <person name="Spinola L.A.F."/>
            <person name="Takita M.A."/>
            <person name="Tamura R.E."/>
            <person name="Teixeira E.C."/>
            <person name="Tezza R.I.D."/>
            <person name="Trindade dos Santos M."/>
            <person name="Truffi D."/>
            <person name="Tsai S.M."/>
            <person name="White F.F."/>
            <person name="Setubal J.C."/>
            <person name="Kitajima J.P."/>
        </authorList>
    </citation>
    <scope>NUCLEOTIDE SEQUENCE [LARGE SCALE GENOMIC DNA]</scope>
    <source>
        <strain>306</strain>
    </source>
</reference>
<evidence type="ECO:0000255" key="1">
    <source>
        <dbReference type="HAMAP-Rule" id="MF_01023"/>
    </source>
</evidence>